<dbReference type="EMBL" id="AK133950">
    <property type="protein sequence ID" value="BAE21947.1"/>
    <property type="molecule type" value="mRNA"/>
</dbReference>
<dbReference type="EMBL" id="AL683822">
    <property type="status" value="NOT_ANNOTATED_CDS"/>
    <property type="molecule type" value="Genomic_DNA"/>
</dbReference>
<dbReference type="CCDS" id="CCDS30408.1"/>
<dbReference type="RefSeq" id="NP_001009575.2">
    <property type="nucleotide sequence ID" value="NM_001009575.6"/>
</dbReference>
<dbReference type="SMR" id="Q3UZB0"/>
<dbReference type="BioGRID" id="243463">
    <property type="interactions" value="1"/>
</dbReference>
<dbReference type="FunCoup" id="Q3UZB0">
    <property type="interactions" value="14"/>
</dbReference>
<dbReference type="IntAct" id="Q3UZB0">
    <property type="interactions" value="1"/>
</dbReference>
<dbReference type="STRING" id="10090.ENSMUSP00000094045"/>
<dbReference type="GlyGen" id="Q3UZB0">
    <property type="glycosylation" value="2 sites, 1 O-linked glycan (2 sites)"/>
</dbReference>
<dbReference type="iPTMnet" id="Q3UZB0"/>
<dbReference type="PhosphoSitePlus" id="Q3UZB0"/>
<dbReference type="PaxDb" id="10090-ENSMUSP00000094045"/>
<dbReference type="ProteomicsDB" id="283272"/>
<dbReference type="Antibodypedia" id="384">
    <property type="antibodies" value="44 antibodies from 13 providers"/>
</dbReference>
<dbReference type="DNASU" id="494468"/>
<dbReference type="Ensembl" id="ENSMUST00000096321.3">
    <property type="protein sequence ID" value="ENSMUSP00000094045.3"/>
    <property type="gene ID" value="ENSMUSG00000072969.3"/>
</dbReference>
<dbReference type="GeneID" id="494468"/>
<dbReference type="KEGG" id="mmu:494468"/>
<dbReference type="UCSC" id="uc009uhk.1">
    <property type="organism name" value="mouse"/>
</dbReference>
<dbReference type="AGR" id="MGI:2148026"/>
<dbReference type="CTD" id="64860"/>
<dbReference type="MGI" id="MGI:2148026">
    <property type="gene designation" value="Armcx5"/>
</dbReference>
<dbReference type="VEuPathDB" id="HostDB:ENSMUSG00000072969"/>
<dbReference type="eggNOG" id="ENOG502RK9I">
    <property type="taxonomic scope" value="Eukaryota"/>
</dbReference>
<dbReference type="GeneTree" id="ENSGT00940000163081"/>
<dbReference type="HOGENOM" id="CLU_037187_2_0_1"/>
<dbReference type="InParanoid" id="Q3UZB0"/>
<dbReference type="OMA" id="NPKACRC"/>
<dbReference type="OrthoDB" id="9530227at2759"/>
<dbReference type="PhylomeDB" id="Q3UZB0"/>
<dbReference type="TreeFam" id="TF335652"/>
<dbReference type="BioGRID-ORCS" id="494468">
    <property type="hits" value="3 hits in 76 CRISPR screens"/>
</dbReference>
<dbReference type="PRO" id="PR:Q3UZB0"/>
<dbReference type="Proteomes" id="UP000000589">
    <property type="component" value="Chromosome X"/>
</dbReference>
<dbReference type="RNAct" id="Q3UZB0">
    <property type="molecule type" value="protein"/>
</dbReference>
<dbReference type="Bgee" id="ENSMUSG00000072969">
    <property type="expression patterns" value="Expressed in animal zygote and 73 other cell types or tissues"/>
</dbReference>
<dbReference type="Gene3D" id="1.25.10.10">
    <property type="entry name" value="Leucine-rich Repeat Variant"/>
    <property type="match status" value="1"/>
</dbReference>
<dbReference type="InterPro" id="IPR011989">
    <property type="entry name" value="ARM-like"/>
</dbReference>
<dbReference type="InterPro" id="IPR006911">
    <property type="entry name" value="ARM-rpt_dom"/>
</dbReference>
<dbReference type="InterPro" id="IPR016024">
    <property type="entry name" value="ARM-type_fold"/>
</dbReference>
<dbReference type="PANTHER" id="PTHR47081">
    <property type="match status" value="1"/>
</dbReference>
<dbReference type="PANTHER" id="PTHR47081:SF2">
    <property type="entry name" value="ARMADILLO REPEAT-CONTAINING X-LINKED PROTEIN 5"/>
    <property type="match status" value="1"/>
</dbReference>
<dbReference type="Pfam" id="PF04826">
    <property type="entry name" value="Arm_2"/>
    <property type="match status" value="1"/>
</dbReference>
<dbReference type="SUPFAM" id="SSF48371">
    <property type="entry name" value="ARM repeat"/>
    <property type="match status" value="1"/>
</dbReference>
<accession>Q3UZB0</accession>
<accession>A2AGB5</accession>
<organism>
    <name type="scientific">Mus musculus</name>
    <name type="common">Mouse</name>
    <dbReference type="NCBI Taxonomy" id="10090"/>
    <lineage>
        <taxon>Eukaryota</taxon>
        <taxon>Metazoa</taxon>
        <taxon>Chordata</taxon>
        <taxon>Craniata</taxon>
        <taxon>Vertebrata</taxon>
        <taxon>Euteleostomi</taxon>
        <taxon>Mammalia</taxon>
        <taxon>Eutheria</taxon>
        <taxon>Euarchontoglires</taxon>
        <taxon>Glires</taxon>
        <taxon>Rodentia</taxon>
        <taxon>Myomorpha</taxon>
        <taxon>Muroidea</taxon>
        <taxon>Muridae</taxon>
        <taxon>Murinae</taxon>
        <taxon>Mus</taxon>
        <taxon>Mus</taxon>
    </lineage>
</organism>
<feature type="chain" id="PRO_0000191373" description="Armadillo repeat-containing X-linked protein 5">
    <location>
        <begin position="1"/>
        <end position="606"/>
    </location>
</feature>
<feature type="repeat" description="ARM 1" evidence="1">
    <location>
        <begin position="349"/>
        <end position="388"/>
    </location>
</feature>
<feature type="repeat" description="ARM 2" evidence="1">
    <location>
        <begin position="470"/>
        <end position="509"/>
    </location>
</feature>
<feature type="repeat" description="ARM 3" evidence="1">
    <location>
        <begin position="511"/>
        <end position="551"/>
    </location>
</feature>
<feature type="repeat" description="ARM 4" evidence="1">
    <location>
        <begin position="568"/>
        <end position="606"/>
    </location>
</feature>
<feature type="region of interest" description="Disordered" evidence="2">
    <location>
        <begin position="1"/>
        <end position="85"/>
    </location>
</feature>
<feature type="compositionally biased region" description="Polar residues" evidence="2">
    <location>
        <begin position="15"/>
        <end position="26"/>
    </location>
</feature>
<feature type="compositionally biased region" description="Basic and acidic residues" evidence="2">
    <location>
        <begin position="40"/>
        <end position="59"/>
    </location>
</feature>
<name>ARMX5_MOUSE</name>
<keyword id="KW-1185">Reference proteome</keyword>
<keyword id="KW-0677">Repeat</keyword>
<evidence type="ECO:0000255" key="1"/>
<evidence type="ECO:0000256" key="2">
    <source>
        <dbReference type="SAM" id="MobiDB-lite"/>
    </source>
</evidence>
<evidence type="ECO:0000269" key="3">
    <source>
    </source>
</evidence>
<evidence type="ECO:0000305" key="4"/>
<sequence length="606" mass="67895">MIGSKTKRKAREESGASSKPGTNSPANAKGKAKNQTTKAVKAEPKEEWGNQAEARDEAVARTQPAISTEPKTVTWKVKKKKDKTNARVMAQAKTELPAGPALVPHTKSDALPTSVVITVTKSEVKIDTGIEASLKGAAKATDKRSIKQKPEIKKEVCVKSRAGDKAKEVCVKSSAGDKAKEVCVKSRAGDKAKEVCVKSRAGDKASIVINTTDEDEDYVCSWFWTGEEPSVGSWFWPKEENPLQVYQPPPKVEEEPEPPDTFDYALKKKAAAWLRGRFIVLVPIEEPQPSLPPDGNWTLVATLIETPLGIRPLTKIPPYGGPYFQTLADLKNQIREKEKYGPNPNTCRCKSRTFSLEPVDFDKLVALLKLTRDPFIHEIATMIMGISPAYPFTQDIVHDVGITVMIENFVNNPNAKKYPRTLNINANPDAPEEVKETEAHVNKVCRDILCCPLNCSVQVEELKLLVSLSVKFDYHHVVIYYVRYFISLLNKGSVKIKFQILRVLLCLSKNQANTRELISAEVMSSLVALFHKNESKANILHIIEIFENINFQFKKRAKLFTKEMFTKSELISIFREAKEFDQKLQDLTDHSDPDVRDKVIRLILKL</sequence>
<reference key="1">
    <citation type="journal article" date="2005" name="Science">
        <title>The transcriptional landscape of the mammalian genome.</title>
        <authorList>
            <person name="Carninci P."/>
            <person name="Kasukawa T."/>
            <person name="Katayama S."/>
            <person name="Gough J."/>
            <person name="Frith M.C."/>
            <person name="Maeda N."/>
            <person name="Oyama R."/>
            <person name="Ravasi T."/>
            <person name="Lenhard B."/>
            <person name="Wells C."/>
            <person name="Kodzius R."/>
            <person name="Shimokawa K."/>
            <person name="Bajic V.B."/>
            <person name="Brenner S.E."/>
            <person name="Batalov S."/>
            <person name="Forrest A.R."/>
            <person name="Zavolan M."/>
            <person name="Davis M.J."/>
            <person name="Wilming L.G."/>
            <person name="Aidinis V."/>
            <person name="Allen J.E."/>
            <person name="Ambesi-Impiombato A."/>
            <person name="Apweiler R."/>
            <person name="Aturaliya R.N."/>
            <person name="Bailey T.L."/>
            <person name="Bansal M."/>
            <person name="Baxter L."/>
            <person name="Beisel K.W."/>
            <person name="Bersano T."/>
            <person name="Bono H."/>
            <person name="Chalk A.M."/>
            <person name="Chiu K.P."/>
            <person name="Choudhary V."/>
            <person name="Christoffels A."/>
            <person name="Clutterbuck D.R."/>
            <person name="Crowe M.L."/>
            <person name="Dalla E."/>
            <person name="Dalrymple B.P."/>
            <person name="de Bono B."/>
            <person name="Della Gatta G."/>
            <person name="di Bernardo D."/>
            <person name="Down T."/>
            <person name="Engstrom P."/>
            <person name="Fagiolini M."/>
            <person name="Faulkner G."/>
            <person name="Fletcher C.F."/>
            <person name="Fukushima T."/>
            <person name="Furuno M."/>
            <person name="Futaki S."/>
            <person name="Gariboldi M."/>
            <person name="Georgii-Hemming P."/>
            <person name="Gingeras T.R."/>
            <person name="Gojobori T."/>
            <person name="Green R.E."/>
            <person name="Gustincich S."/>
            <person name="Harbers M."/>
            <person name="Hayashi Y."/>
            <person name="Hensch T.K."/>
            <person name="Hirokawa N."/>
            <person name="Hill D."/>
            <person name="Huminiecki L."/>
            <person name="Iacono M."/>
            <person name="Ikeo K."/>
            <person name="Iwama A."/>
            <person name="Ishikawa T."/>
            <person name="Jakt M."/>
            <person name="Kanapin A."/>
            <person name="Katoh M."/>
            <person name="Kawasawa Y."/>
            <person name="Kelso J."/>
            <person name="Kitamura H."/>
            <person name="Kitano H."/>
            <person name="Kollias G."/>
            <person name="Krishnan S.P."/>
            <person name="Kruger A."/>
            <person name="Kummerfeld S.K."/>
            <person name="Kurochkin I.V."/>
            <person name="Lareau L.F."/>
            <person name="Lazarevic D."/>
            <person name="Lipovich L."/>
            <person name="Liu J."/>
            <person name="Liuni S."/>
            <person name="McWilliam S."/>
            <person name="Madan Babu M."/>
            <person name="Madera M."/>
            <person name="Marchionni L."/>
            <person name="Matsuda H."/>
            <person name="Matsuzawa S."/>
            <person name="Miki H."/>
            <person name="Mignone F."/>
            <person name="Miyake S."/>
            <person name="Morris K."/>
            <person name="Mottagui-Tabar S."/>
            <person name="Mulder N."/>
            <person name="Nakano N."/>
            <person name="Nakauchi H."/>
            <person name="Ng P."/>
            <person name="Nilsson R."/>
            <person name="Nishiguchi S."/>
            <person name="Nishikawa S."/>
            <person name="Nori F."/>
            <person name="Ohara O."/>
            <person name="Okazaki Y."/>
            <person name="Orlando V."/>
            <person name="Pang K.C."/>
            <person name="Pavan W.J."/>
            <person name="Pavesi G."/>
            <person name="Pesole G."/>
            <person name="Petrovsky N."/>
            <person name="Piazza S."/>
            <person name="Reed J."/>
            <person name="Reid J.F."/>
            <person name="Ring B.Z."/>
            <person name="Ringwald M."/>
            <person name="Rost B."/>
            <person name="Ruan Y."/>
            <person name="Salzberg S.L."/>
            <person name="Sandelin A."/>
            <person name="Schneider C."/>
            <person name="Schoenbach C."/>
            <person name="Sekiguchi K."/>
            <person name="Semple C.A."/>
            <person name="Seno S."/>
            <person name="Sessa L."/>
            <person name="Sheng Y."/>
            <person name="Shibata Y."/>
            <person name="Shimada H."/>
            <person name="Shimada K."/>
            <person name="Silva D."/>
            <person name="Sinclair B."/>
            <person name="Sperling S."/>
            <person name="Stupka E."/>
            <person name="Sugiura K."/>
            <person name="Sultana R."/>
            <person name="Takenaka Y."/>
            <person name="Taki K."/>
            <person name="Tammoja K."/>
            <person name="Tan S.L."/>
            <person name="Tang S."/>
            <person name="Taylor M.S."/>
            <person name="Tegner J."/>
            <person name="Teichmann S.A."/>
            <person name="Ueda H.R."/>
            <person name="van Nimwegen E."/>
            <person name="Verardo R."/>
            <person name="Wei C.L."/>
            <person name="Yagi K."/>
            <person name="Yamanishi H."/>
            <person name="Zabarovsky E."/>
            <person name="Zhu S."/>
            <person name="Zimmer A."/>
            <person name="Hide W."/>
            <person name="Bult C."/>
            <person name="Grimmond S.M."/>
            <person name="Teasdale R.D."/>
            <person name="Liu E.T."/>
            <person name="Brusic V."/>
            <person name="Quackenbush J."/>
            <person name="Wahlestedt C."/>
            <person name="Mattick J.S."/>
            <person name="Hume D.A."/>
            <person name="Kai C."/>
            <person name="Sasaki D."/>
            <person name="Tomaru Y."/>
            <person name="Fukuda S."/>
            <person name="Kanamori-Katayama M."/>
            <person name="Suzuki M."/>
            <person name="Aoki J."/>
            <person name="Arakawa T."/>
            <person name="Iida J."/>
            <person name="Imamura K."/>
            <person name="Itoh M."/>
            <person name="Kato T."/>
            <person name="Kawaji H."/>
            <person name="Kawagashira N."/>
            <person name="Kawashima T."/>
            <person name="Kojima M."/>
            <person name="Kondo S."/>
            <person name="Konno H."/>
            <person name="Nakano K."/>
            <person name="Ninomiya N."/>
            <person name="Nishio T."/>
            <person name="Okada M."/>
            <person name="Plessy C."/>
            <person name="Shibata K."/>
            <person name="Shiraki T."/>
            <person name="Suzuki S."/>
            <person name="Tagami M."/>
            <person name="Waki K."/>
            <person name="Watahiki A."/>
            <person name="Okamura-Oho Y."/>
            <person name="Suzuki H."/>
            <person name="Kawai J."/>
            <person name="Hayashizaki Y."/>
        </authorList>
    </citation>
    <scope>NUCLEOTIDE SEQUENCE [LARGE SCALE MRNA]</scope>
    <source>
        <strain>C57BL/6J</strain>
    </source>
</reference>
<reference key="2">
    <citation type="journal article" date="2009" name="PLoS Biol.">
        <title>Lineage-specific biology revealed by a finished genome assembly of the mouse.</title>
        <authorList>
            <person name="Church D.M."/>
            <person name="Goodstadt L."/>
            <person name="Hillier L.W."/>
            <person name="Zody M.C."/>
            <person name="Goldstein S."/>
            <person name="She X."/>
            <person name="Bult C.J."/>
            <person name="Agarwala R."/>
            <person name="Cherry J.L."/>
            <person name="DiCuccio M."/>
            <person name="Hlavina W."/>
            <person name="Kapustin Y."/>
            <person name="Meric P."/>
            <person name="Maglott D."/>
            <person name="Birtle Z."/>
            <person name="Marques A.C."/>
            <person name="Graves T."/>
            <person name="Zhou S."/>
            <person name="Teague B."/>
            <person name="Potamousis K."/>
            <person name="Churas C."/>
            <person name="Place M."/>
            <person name="Herschleb J."/>
            <person name="Runnheim R."/>
            <person name="Forrest D."/>
            <person name="Amos-Landgraf J."/>
            <person name="Schwartz D.C."/>
            <person name="Cheng Z."/>
            <person name="Lindblad-Toh K."/>
            <person name="Eichler E.E."/>
            <person name="Ponting C.P."/>
        </authorList>
    </citation>
    <scope>NUCLEOTIDE SEQUENCE [LARGE SCALE GENOMIC DNA]</scope>
    <source>
        <strain>C57BL/6J</strain>
    </source>
</reference>
<reference key="3">
    <citation type="journal article" date="2012" name="Nat. Commun.">
        <title>The eutherian Armcx genes regulate mitochondrial trafficking in neurons and interact with Miro and Trak2.</title>
        <authorList>
            <person name="Lopez-Domenech G."/>
            <person name="Serrat R."/>
            <person name="Mirra S."/>
            <person name="D'Aniello S."/>
            <person name="Somorjai I."/>
            <person name="Abad A."/>
            <person name="Vitureira N."/>
            <person name="Garcia-Arumi E."/>
            <person name="Alonso M.T."/>
            <person name="Rodriguez-Prados M."/>
            <person name="Burgaya F."/>
            <person name="Andreu A.L."/>
            <person name="Garcia-Sancho J."/>
            <person name="Trullas R."/>
            <person name="Garcia-Fernandez J."/>
            <person name="Soriano E."/>
        </authorList>
    </citation>
    <scope>TISSUE SPECIFICITY</scope>
</reference>
<gene>
    <name type="primary">Armcx5</name>
</gene>
<comment type="tissue specificity">
    <text evidence="3">Highly expressed in the developing neural tissues, neural crest derivatives and hind limbs.</text>
</comment>
<comment type="similarity">
    <text evidence="4">Belongs to the eutherian X-chromosome-specific Armcx family.</text>
</comment>
<protein>
    <recommendedName>
        <fullName>Armadillo repeat-containing X-linked protein 5</fullName>
    </recommendedName>
</protein>
<proteinExistence type="evidence at transcript level"/>